<name>VP24_MABVO</name>
<organismHost>
    <name type="scientific">Chlorocebus aethiops</name>
    <name type="common">Green monkey</name>
    <name type="synonym">Cercopithecus aethiops</name>
    <dbReference type="NCBI Taxonomy" id="9534"/>
</organismHost>
<organismHost>
    <name type="scientific">Homo sapiens</name>
    <name type="common">Human</name>
    <dbReference type="NCBI Taxonomy" id="9606"/>
</organismHost>
<organismHost>
    <name type="scientific">Rousettus aegyptiacus</name>
    <name type="common">Egyptian fruit bat</name>
    <name type="synonym">Pteropus aegyptiacus</name>
    <dbReference type="NCBI Taxonomy" id="9407"/>
</organismHost>
<evidence type="ECO:0000250" key="1"/>
<evidence type="ECO:0000250" key="2">
    <source>
        <dbReference type="UniProtKB" id="P35256"/>
    </source>
</evidence>
<evidence type="ECO:0000305" key="3"/>
<accession>Q6UY64</accession>
<organism>
    <name type="scientific">Lake Victoria marburgvirus (strain Ozolin-75)</name>
    <name type="common">MARV</name>
    <name type="synonym">Marburg virus (strain South Africa/Ozolin/1975)</name>
    <dbReference type="NCBI Taxonomy" id="482820"/>
    <lineage>
        <taxon>Viruses</taxon>
        <taxon>Riboviria</taxon>
        <taxon>Orthornavirae</taxon>
        <taxon>Negarnaviricota</taxon>
        <taxon>Haploviricotina</taxon>
        <taxon>Monjiviricetes</taxon>
        <taxon>Mononegavirales</taxon>
        <taxon>Filoviridae</taxon>
        <taxon>Orthomarburgvirus</taxon>
        <taxon>Orthomarburgvirus marburgense</taxon>
    </lineage>
</organism>
<gene>
    <name type="primary">VP24</name>
</gene>
<feature type="chain" id="PRO_0000314990" description="Membrane-associated protein VP24">
    <location>
        <begin position="1"/>
        <end position="253"/>
    </location>
</feature>
<proteinExistence type="inferred from homology"/>
<comment type="function">
    <text evidence="2">May act as a minor matrix protein that plays a role in assembly of viral nucleocapsid and virion budding. Unlike Ebola VP24, mVP24 has no measurable impact of host dendritic cell function.</text>
</comment>
<comment type="subunit">
    <text evidence="1 3">Monomer or homotetramer (Potential). Interacts with the nucleoprotein (By similarity).</text>
</comment>
<comment type="subcellular location">
    <subcellularLocation>
        <location evidence="1">Virion membrane</location>
        <topology evidence="1">Peripheral membrane protein</topology>
    </subcellularLocation>
    <subcellularLocation>
        <location evidence="1">Host cell membrane</location>
        <topology evidence="1">Peripheral membrane protein</topology>
        <orientation evidence="1">Cytoplasmic side</orientation>
    </subcellularLocation>
    <subcellularLocation>
        <location evidence="1">Host endomembrane system</location>
        <topology evidence="1">Peripheral membrane protein</topology>
    </subcellularLocation>
    <text evidence="1">In virion, localizes on the intravirional side of the membrane. In the host cell, it is found associated with virus-induced membrane proliferation foci and to the plasma membrane where budding takes place (By similarity).</text>
</comment>
<comment type="similarity">
    <text evidence="3">Belongs to the filoviridae membrane-associated protein VP24 family.</text>
</comment>
<dbReference type="EMBL" id="AY358025">
    <property type="protein sequence ID" value="AAQ55260.1"/>
    <property type="molecule type" value="Genomic_RNA"/>
</dbReference>
<dbReference type="SMR" id="Q6UY64"/>
<dbReference type="Proteomes" id="UP000000838">
    <property type="component" value="Genome"/>
</dbReference>
<dbReference type="GO" id="GO:0033645">
    <property type="term" value="C:host cell endomembrane system"/>
    <property type="evidence" value="ECO:0007669"/>
    <property type="project" value="UniProtKB-SubCell"/>
</dbReference>
<dbReference type="GO" id="GO:0020002">
    <property type="term" value="C:host cell plasma membrane"/>
    <property type="evidence" value="ECO:0007669"/>
    <property type="project" value="UniProtKB-SubCell"/>
</dbReference>
<dbReference type="GO" id="GO:0016020">
    <property type="term" value="C:membrane"/>
    <property type="evidence" value="ECO:0007669"/>
    <property type="project" value="UniProtKB-KW"/>
</dbReference>
<dbReference type="GO" id="GO:0055036">
    <property type="term" value="C:virion membrane"/>
    <property type="evidence" value="ECO:0007669"/>
    <property type="project" value="UniProtKB-SubCell"/>
</dbReference>
<dbReference type="GO" id="GO:0039660">
    <property type="term" value="F:structural constituent of virion"/>
    <property type="evidence" value="ECO:0007669"/>
    <property type="project" value="UniProtKB-KW"/>
</dbReference>
<dbReference type="GO" id="GO:0016032">
    <property type="term" value="P:viral process"/>
    <property type="evidence" value="ECO:0007669"/>
    <property type="project" value="InterPro"/>
</dbReference>
<dbReference type="InterPro" id="IPR009433">
    <property type="entry name" value="Filo_VP24"/>
</dbReference>
<dbReference type="Pfam" id="PF06389">
    <property type="entry name" value="Filo_VP24"/>
    <property type="match status" value="1"/>
</dbReference>
<dbReference type="PIRSF" id="PIRSF011355">
    <property type="entry name" value="VP24"/>
    <property type="match status" value="1"/>
</dbReference>
<sequence>MAELSTRYNLPANVTEKSINLDLNSTARWIKEPSVGGWTVKWGNFVFHIPNTGMTLLHHLKSNFVVPEWQQTRNLFSHLFKNPKSTIIEPFLALRILLGVALKDQELQQSLIPGFRSIVHMLSEWLLLEVTSAIHISPNLLGIYLTSDMFKILMAGVKNFFNKMFTLHVVNDHGKPSSIEIKLTGQQIIITRVNMGFLVEVRRIDIEPCCGETILSESVVFGLVAEAVLREHSQMEKGQPLNLTQYMNSKIAI</sequence>
<reference key="1">
    <citation type="submission" date="2003-08" db="EMBL/GenBank/DDBJ databases">
        <authorList>
            <person name="Bowen M.D."/>
            <person name="Thurman K."/>
            <person name="Minor E."/>
            <person name="Ibrahim M.S."/>
            <person name="Meyer R.F."/>
            <person name="Malfatti S.A."/>
            <person name="Do L.H."/>
            <person name="Smith K.L."/>
            <person name="McCready P.M."/>
            <person name="Chain P.S.G."/>
        </authorList>
    </citation>
    <scope>NUCLEOTIDE SEQUENCE [GENOMIC RNA]</scope>
</reference>
<protein>
    <recommendedName>
        <fullName>Membrane-associated protein VP24</fullName>
    </recommendedName>
    <alternativeName>
        <fullName>Marburg VP24</fullName>
        <shortName>mVP24</shortName>
    </alternativeName>
</protein>
<keyword id="KW-1032">Host cell membrane</keyword>
<keyword id="KW-1043">Host membrane</keyword>
<keyword id="KW-0472">Membrane</keyword>
<keyword id="KW-0468">Viral matrix protein</keyword>
<keyword id="KW-0946">Virion</keyword>